<accession>B1XZP2</accession>
<comment type="similarity">
    <text evidence="1">Belongs to the bacterial ribosomal protein bL32 family.</text>
</comment>
<name>RL32_LEPCP</name>
<sequence>MAVQQNKKSPSKRGMHRSHNALNTPGTAIEPTTGEVHLRHHISPTGFYRGRKVLKTKADA</sequence>
<dbReference type="EMBL" id="CP001013">
    <property type="protein sequence ID" value="ACB32888.1"/>
    <property type="molecule type" value="Genomic_DNA"/>
</dbReference>
<dbReference type="RefSeq" id="WP_012345650.1">
    <property type="nucleotide sequence ID" value="NC_010524.1"/>
</dbReference>
<dbReference type="SMR" id="B1XZP2"/>
<dbReference type="STRING" id="395495.Lcho_0613"/>
<dbReference type="KEGG" id="lch:Lcho_0613"/>
<dbReference type="eggNOG" id="COG0333">
    <property type="taxonomic scope" value="Bacteria"/>
</dbReference>
<dbReference type="HOGENOM" id="CLU_129084_2_1_4"/>
<dbReference type="OrthoDB" id="9801927at2"/>
<dbReference type="Proteomes" id="UP000001693">
    <property type="component" value="Chromosome"/>
</dbReference>
<dbReference type="GO" id="GO:0015934">
    <property type="term" value="C:large ribosomal subunit"/>
    <property type="evidence" value="ECO:0007669"/>
    <property type="project" value="InterPro"/>
</dbReference>
<dbReference type="GO" id="GO:0003735">
    <property type="term" value="F:structural constituent of ribosome"/>
    <property type="evidence" value="ECO:0007669"/>
    <property type="project" value="InterPro"/>
</dbReference>
<dbReference type="GO" id="GO:0006412">
    <property type="term" value="P:translation"/>
    <property type="evidence" value="ECO:0007669"/>
    <property type="project" value="UniProtKB-UniRule"/>
</dbReference>
<dbReference type="HAMAP" id="MF_00340">
    <property type="entry name" value="Ribosomal_bL32"/>
    <property type="match status" value="1"/>
</dbReference>
<dbReference type="InterPro" id="IPR002677">
    <property type="entry name" value="Ribosomal_bL32"/>
</dbReference>
<dbReference type="InterPro" id="IPR044957">
    <property type="entry name" value="Ribosomal_bL32_bact"/>
</dbReference>
<dbReference type="InterPro" id="IPR011332">
    <property type="entry name" value="Ribosomal_zn-bd"/>
</dbReference>
<dbReference type="NCBIfam" id="TIGR01031">
    <property type="entry name" value="rpmF_bact"/>
    <property type="match status" value="1"/>
</dbReference>
<dbReference type="PANTHER" id="PTHR35534">
    <property type="entry name" value="50S RIBOSOMAL PROTEIN L32"/>
    <property type="match status" value="1"/>
</dbReference>
<dbReference type="PANTHER" id="PTHR35534:SF1">
    <property type="entry name" value="LARGE RIBOSOMAL SUBUNIT PROTEIN BL32"/>
    <property type="match status" value="1"/>
</dbReference>
<dbReference type="Pfam" id="PF01783">
    <property type="entry name" value="Ribosomal_L32p"/>
    <property type="match status" value="1"/>
</dbReference>
<dbReference type="SUPFAM" id="SSF57829">
    <property type="entry name" value="Zn-binding ribosomal proteins"/>
    <property type="match status" value="1"/>
</dbReference>
<proteinExistence type="inferred from homology"/>
<gene>
    <name evidence="1" type="primary">rpmF</name>
    <name type="ordered locus">Lcho_0613</name>
</gene>
<protein>
    <recommendedName>
        <fullName evidence="1">Large ribosomal subunit protein bL32</fullName>
    </recommendedName>
    <alternativeName>
        <fullName evidence="3">50S ribosomal protein L32</fullName>
    </alternativeName>
</protein>
<feature type="chain" id="PRO_1000120138" description="Large ribosomal subunit protein bL32">
    <location>
        <begin position="1"/>
        <end position="60"/>
    </location>
</feature>
<feature type="region of interest" description="Disordered" evidence="2">
    <location>
        <begin position="1"/>
        <end position="46"/>
    </location>
</feature>
<feature type="compositionally biased region" description="Basic residues" evidence="2">
    <location>
        <begin position="9"/>
        <end position="19"/>
    </location>
</feature>
<reference key="1">
    <citation type="submission" date="2008-03" db="EMBL/GenBank/DDBJ databases">
        <title>Complete sequence of Leptothrix cholodnii SP-6.</title>
        <authorList>
            <consortium name="US DOE Joint Genome Institute"/>
            <person name="Copeland A."/>
            <person name="Lucas S."/>
            <person name="Lapidus A."/>
            <person name="Glavina del Rio T."/>
            <person name="Dalin E."/>
            <person name="Tice H."/>
            <person name="Bruce D."/>
            <person name="Goodwin L."/>
            <person name="Pitluck S."/>
            <person name="Chertkov O."/>
            <person name="Brettin T."/>
            <person name="Detter J.C."/>
            <person name="Han C."/>
            <person name="Kuske C.R."/>
            <person name="Schmutz J."/>
            <person name="Larimer F."/>
            <person name="Land M."/>
            <person name="Hauser L."/>
            <person name="Kyrpides N."/>
            <person name="Lykidis A."/>
            <person name="Emerson D."/>
            <person name="Richardson P."/>
        </authorList>
    </citation>
    <scope>NUCLEOTIDE SEQUENCE [LARGE SCALE GENOMIC DNA]</scope>
    <source>
        <strain>ATCC 51168 / LMG 8142 / SP-6</strain>
    </source>
</reference>
<evidence type="ECO:0000255" key="1">
    <source>
        <dbReference type="HAMAP-Rule" id="MF_00340"/>
    </source>
</evidence>
<evidence type="ECO:0000256" key="2">
    <source>
        <dbReference type="SAM" id="MobiDB-lite"/>
    </source>
</evidence>
<evidence type="ECO:0000305" key="3"/>
<organism>
    <name type="scientific">Leptothrix cholodnii (strain ATCC 51168 / LMG 8142 / SP-6)</name>
    <name type="common">Leptothrix discophora (strain SP-6)</name>
    <dbReference type="NCBI Taxonomy" id="395495"/>
    <lineage>
        <taxon>Bacteria</taxon>
        <taxon>Pseudomonadati</taxon>
        <taxon>Pseudomonadota</taxon>
        <taxon>Betaproteobacteria</taxon>
        <taxon>Burkholderiales</taxon>
        <taxon>Sphaerotilaceae</taxon>
        <taxon>Leptothrix</taxon>
    </lineage>
</organism>
<keyword id="KW-1185">Reference proteome</keyword>
<keyword id="KW-0687">Ribonucleoprotein</keyword>
<keyword id="KW-0689">Ribosomal protein</keyword>